<feature type="chain" id="PRO_0000282063" description="23S rRNA (uracil(1939)-C(5))-methyltransferase RlmD">
    <location>
        <begin position="1"/>
        <end position="449"/>
    </location>
</feature>
<feature type="domain" description="TRAM" evidence="1">
    <location>
        <begin position="12"/>
        <end position="70"/>
    </location>
</feature>
<feature type="active site" description="Nucleophile" evidence="1">
    <location>
        <position position="405"/>
    </location>
</feature>
<feature type="binding site" evidence="1">
    <location>
        <position position="83"/>
    </location>
    <ligand>
        <name>[4Fe-4S] cluster</name>
        <dbReference type="ChEBI" id="CHEBI:49883"/>
    </ligand>
</feature>
<feature type="binding site" evidence="1">
    <location>
        <position position="89"/>
    </location>
    <ligand>
        <name>[4Fe-4S] cluster</name>
        <dbReference type="ChEBI" id="CHEBI:49883"/>
    </ligand>
</feature>
<feature type="binding site" evidence="1">
    <location>
        <position position="92"/>
    </location>
    <ligand>
        <name>[4Fe-4S] cluster</name>
        <dbReference type="ChEBI" id="CHEBI:49883"/>
    </ligand>
</feature>
<feature type="binding site" evidence="1">
    <location>
        <position position="170"/>
    </location>
    <ligand>
        <name>[4Fe-4S] cluster</name>
        <dbReference type="ChEBI" id="CHEBI:49883"/>
    </ligand>
</feature>
<feature type="binding site" evidence="1">
    <location>
        <position position="282"/>
    </location>
    <ligand>
        <name>S-adenosyl-L-methionine</name>
        <dbReference type="ChEBI" id="CHEBI:59789"/>
    </ligand>
</feature>
<feature type="binding site" evidence="1">
    <location>
        <position position="311"/>
    </location>
    <ligand>
        <name>S-adenosyl-L-methionine</name>
        <dbReference type="ChEBI" id="CHEBI:59789"/>
    </ligand>
</feature>
<feature type="binding site" evidence="1">
    <location>
        <position position="316"/>
    </location>
    <ligand>
        <name>S-adenosyl-L-methionine</name>
        <dbReference type="ChEBI" id="CHEBI:59789"/>
    </ligand>
</feature>
<feature type="binding site" evidence="1">
    <location>
        <position position="332"/>
    </location>
    <ligand>
        <name>S-adenosyl-L-methionine</name>
        <dbReference type="ChEBI" id="CHEBI:59789"/>
    </ligand>
</feature>
<feature type="binding site" evidence="1">
    <location>
        <position position="359"/>
    </location>
    <ligand>
        <name>S-adenosyl-L-methionine</name>
        <dbReference type="ChEBI" id="CHEBI:59789"/>
    </ligand>
</feature>
<feature type="binding site" evidence="1">
    <location>
        <position position="379"/>
    </location>
    <ligand>
        <name>S-adenosyl-L-methionine</name>
        <dbReference type="ChEBI" id="CHEBI:59789"/>
    </ligand>
</feature>
<proteinExistence type="inferred from homology"/>
<comment type="function">
    <text evidence="1">Catalyzes the formation of 5-methyl-uridine at position 1939 (m5U1939) in 23S rRNA.</text>
</comment>
<comment type="catalytic activity">
    <reaction evidence="1">
        <text>uridine(1939) in 23S rRNA + S-adenosyl-L-methionine = 5-methyluridine(1939) in 23S rRNA + S-adenosyl-L-homocysteine + H(+)</text>
        <dbReference type="Rhea" id="RHEA:42908"/>
        <dbReference type="Rhea" id="RHEA-COMP:10278"/>
        <dbReference type="Rhea" id="RHEA-COMP:10279"/>
        <dbReference type="ChEBI" id="CHEBI:15378"/>
        <dbReference type="ChEBI" id="CHEBI:57856"/>
        <dbReference type="ChEBI" id="CHEBI:59789"/>
        <dbReference type="ChEBI" id="CHEBI:65315"/>
        <dbReference type="ChEBI" id="CHEBI:74447"/>
        <dbReference type="EC" id="2.1.1.190"/>
    </reaction>
</comment>
<comment type="similarity">
    <text evidence="1">Belongs to the class I-like SAM-binding methyltransferase superfamily. RNA M5U methyltransferase family. RlmD subfamily.</text>
</comment>
<protein>
    <recommendedName>
        <fullName evidence="1">23S rRNA (uracil(1939)-C(5))-methyltransferase RlmD</fullName>
        <ecNumber evidence="1">2.1.1.190</ecNumber>
    </recommendedName>
    <alternativeName>
        <fullName evidence="1">23S rRNA(m5U1939)-methyltransferase</fullName>
    </alternativeName>
</protein>
<accession>A0KU76</accession>
<sequence length="449" mass="48957">MAQFFKAKPNSSKQLSAKQSFSVHQLDHLGAGIAQHQGKVVFIPGALPNETVQAQLTEQKKNYARAKLIKVETPSAERVTPLCPHYQSCGGCDLQHMSLAGQREHKSAALVDIMAKFAGAEGNSVPALTGEGWHYRRRARLATLFDKNTKQLSLGFRASSSNQVVPIDSCLVLAKPLADLIAPFAKLLNQLAAKSSLGHVELIDADNGHFAVIRITKPLNDKDMAKLAQFAEQHQIHICLQDNNGEFHGVNGTLLLPVYQLLDDNADATPVSLTFTPGNFVQVNAQINKTMVAQALEWLAPQPGERILDLFCGMGNFSLPLAKLGAEVIGVEGVPEMVSQARENAAANGLSNLTFYHGDLSADLSCEPWMGKIDKLLLDPARAGAFESLQWLKKMKPRQVVYVSCNPASLARDSAVLLERGYKLQKLGLIDMFPQTHHIEAMALFELAK</sequence>
<organism>
    <name type="scientific">Shewanella sp. (strain ANA-3)</name>
    <dbReference type="NCBI Taxonomy" id="94122"/>
    <lineage>
        <taxon>Bacteria</taxon>
        <taxon>Pseudomonadati</taxon>
        <taxon>Pseudomonadota</taxon>
        <taxon>Gammaproteobacteria</taxon>
        <taxon>Alteromonadales</taxon>
        <taxon>Shewanellaceae</taxon>
        <taxon>Shewanella</taxon>
    </lineage>
</organism>
<keyword id="KW-0004">4Fe-4S</keyword>
<keyword id="KW-0408">Iron</keyword>
<keyword id="KW-0411">Iron-sulfur</keyword>
<keyword id="KW-0479">Metal-binding</keyword>
<keyword id="KW-0489">Methyltransferase</keyword>
<keyword id="KW-0698">rRNA processing</keyword>
<keyword id="KW-0949">S-adenosyl-L-methionine</keyword>
<keyword id="KW-0808">Transferase</keyword>
<name>RLMD_SHESA</name>
<reference key="1">
    <citation type="submission" date="2006-09" db="EMBL/GenBank/DDBJ databases">
        <title>Complete sequence of chromosome 1 of Shewanella sp. ANA-3.</title>
        <authorList>
            <person name="Copeland A."/>
            <person name="Lucas S."/>
            <person name="Lapidus A."/>
            <person name="Barry K."/>
            <person name="Detter J.C."/>
            <person name="Glavina del Rio T."/>
            <person name="Hammon N."/>
            <person name="Israni S."/>
            <person name="Dalin E."/>
            <person name="Tice H."/>
            <person name="Pitluck S."/>
            <person name="Chertkov O."/>
            <person name="Brettin T."/>
            <person name="Bruce D."/>
            <person name="Han C."/>
            <person name="Tapia R."/>
            <person name="Gilna P."/>
            <person name="Schmutz J."/>
            <person name="Larimer F."/>
            <person name="Land M."/>
            <person name="Hauser L."/>
            <person name="Kyrpides N."/>
            <person name="Kim E."/>
            <person name="Newman D."/>
            <person name="Salticov C."/>
            <person name="Konstantinidis K."/>
            <person name="Klappenback J."/>
            <person name="Tiedje J."/>
            <person name="Richardson P."/>
        </authorList>
    </citation>
    <scope>NUCLEOTIDE SEQUENCE [LARGE SCALE GENOMIC DNA]</scope>
    <source>
        <strain>ANA-3</strain>
    </source>
</reference>
<dbReference type="EC" id="2.1.1.190" evidence="1"/>
<dbReference type="EMBL" id="CP000469">
    <property type="protein sequence ID" value="ABK47345.1"/>
    <property type="molecule type" value="Genomic_DNA"/>
</dbReference>
<dbReference type="RefSeq" id="WP_011716212.1">
    <property type="nucleotide sequence ID" value="NC_008577.1"/>
</dbReference>
<dbReference type="SMR" id="A0KU76"/>
<dbReference type="STRING" id="94122.Shewana3_1110"/>
<dbReference type="KEGG" id="shn:Shewana3_1110"/>
<dbReference type="eggNOG" id="COG2265">
    <property type="taxonomic scope" value="Bacteria"/>
</dbReference>
<dbReference type="HOGENOM" id="CLU_014689_8_2_6"/>
<dbReference type="OrthoDB" id="9804590at2"/>
<dbReference type="Proteomes" id="UP000002589">
    <property type="component" value="Chromosome"/>
</dbReference>
<dbReference type="GO" id="GO:0051539">
    <property type="term" value="F:4 iron, 4 sulfur cluster binding"/>
    <property type="evidence" value="ECO:0007669"/>
    <property type="project" value="UniProtKB-KW"/>
</dbReference>
<dbReference type="GO" id="GO:0005506">
    <property type="term" value="F:iron ion binding"/>
    <property type="evidence" value="ECO:0007669"/>
    <property type="project" value="UniProtKB-UniRule"/>
</dbReference>
<dbReference type="GO" id="GO:0003723">
    <property type="term" value="F:RNA binding"/>
    <property type="evidence" value="ECO:0007669"/>
    <property type="project" value="InterPro"/>
</dbReference>
<dbReference type="GO" id="GO:0070041">
    <property type="term" value="F:rRNA (uridine-C5-)-methyltransferase activity"/>
    <property type="evidence" value="ECO:0007669"/>
    <property type="project" value="UniProtKB-UniRule"/>
</dbReference>
<dbReference type="GO" id="GO:0070475">
    <property type="term" value="P:rRNA base methylation"/>
    <property type="evidence" value="ECO:0007669"/>
    <property type="project" value="TreeGrafter"/>
</dbReference>
<dbReference type="CDD" id="cd02440">
    <property type="entry name" value="AdoMet_MTases"/>
    <property type="match status" value="1"/>
</dbReference>
<dbReference type="FunFam" id="3.40.50.150:FF:000009">
    <property type="entry name" value="23S rRNA (Uracil(1939)-C(5))-methyltransferase RlmD"/>
    <property type="match status" value="1"/>
</dbReference>
<dbReference type="FunFam" id="2.40.50.1070:FF:000017">
    <property type="entry name" value="23S rRNA (uracil(1939)-C(5))-methyltransferase RlmD"/>
    <property type="match status" value="1"/>
</dbReference>
<dbReference type="FunFam" id="2.40.50.140:FF:000097">
    <property type="entry name" value="23S rRNA (uracil(1939)-C(5))-methyltransferase RlmD"/>
    <property type="match status" value="1"/>
</dbReference>
<dbReference type="Gene3D" id="2.40.50.1070">
    <property type="match status" value="1"/>
</dbReference>
<dbReference type="Gene3D" id="2.40.50.140">
    <property type="entry name" value="Nucleic acid-binding proteins"/>
    <property type="match status" value="1"/>
</dbReference>
<dbReference type="Gene3D" id="3.40.50.150">
    <property type="entry name" value="Vaccinia Virus protein VP39"/>
    <property type="match status" value="1"/>
</dbReference>
<dbReference type="HAMAP" id="MF_01010">
    <property type="entry name" value="23SrRNA_methyltr_RlmD"/>
    <property type="match status" value="1"/>
</dbReference>
<dbReference type="InterPro" id="IPR001566">
    <property type="entry name" value="23S_rRNA_MeTrfase_RlmD"/>
</dbReference>
<dbReference type="InterPro" id="IPR030390">
    <property type="entry name" value="MeTrfase_TrmA_AS"/>
</dbReference>
<dbReference type="InterPro" id="IPR030391">
    <property type="entry name" value="MeTrfase_TrmA_CS"/>
</dbReference>
<dbReference type="InterPro" id="IPR012340">
    <property type="entry name" value="NA-bd_OB-fold"/>
</dbReference>
<dbReference type="InterPro" id="IPR029063">
    <property type="entry name" value="SAM-dependent_MTases_sf"/>
</dbReference>
<dbReference type="InterPro" id="IPR002792">
    <property type="entry name" value="TRAM_dom"/>
</dbReference>
<dbReference type="InterPro" id="IPR010280">
    <property type="entry name" value="U5_MeTrfase_fam"/>
</dbReference>
<dbReference type="NCBIfam" id="NF009639">
    <property type="entry name" value="PRK13168.1"/>
    <property type="match status" value="1"/>
</dbReference>
<dbReference type="NCBIfam" id="TIGR00479">
    <property type="entry name" value="rumA"/>
    <property type="match status" value="1"/>
</dbReference>
<dbReference type="PANTHER" id="PTHR11061:SF49">
    <property type="entry name" value="23S RRNA (URACIL(1939)-C(5))-METHYLTRANSFERASE RLMD"/>
    <property type="match status" value="1"/>
</dbReference>
<dbReference type="PANTHER" id="PTHR11061">
    <property type="entry name" value="RNA M5U METHYLTRANSFERASE"/>
    <property type="match status" value="1"/>
</dbReference>
<dbReference type="Pfam" id="PF01938">
    <property type="entry name" value="TRAM"/>
    <property type="match status" value="1"/>
</dbReference>
<dbReference type="Pfam" id="PF05958">
    <property type="entry name" value="tRNA_U5-meth_tr"/>
    <property type="match status" value="1"/>
</dbReference>
<dbReference type="SUPFAM" id="SSF50249">
    <property type="entry name" value="Nucleic acid-binding proteins"/>
    <property type="match status" value="1"/>
</dbReference>
<dbReference type="SUPFAM" id="SSF53335">
    <property type="entry name" value="S-adenosyl-L-methionine-dependent methyltransferases"/>
    <property type="match status" value="1"/>
</dbReference>
<dbReference type="PROSITE" id="PS51687">
    <property type="entry name" value="SAM_MT_RNA_M5U"/>
    <property type="match status" value="1"/>
</dbReference>
<dbReference type="PROSITE" id="PS50926">
    <property type="entry name" value="TRAM"/>
    <property type="match status" value="1"/>
</dbReference>
<dbReference type="PROSITE" id="PS01230">
    <property type="entry name" value="TRMA_1"/>
    <property type="match status" value="1"/>
</dbReference>
<dbReference type="PROSITE" id="PS01231">
    <property type="entry name" value="TRMA_2"/>
    <property type="match status" value="1"/>
</dbReference>
<gene>
    <name evidence="1" type="primary">rlmD</name>
    <name type="synonym">rumA</name>
    <name type="ordered locus">Shewana3_1110</name>
</gene>
<evidence type="ECO:0000255" key="1">
    <source>
        <dbReference type="HAMAP-Rule" id="MF_01010"/>
    </source>
</evidence>